<protein>
    <recommendedName>
        <fullName evidence="1">GTP 3',8-cyclase</fullName>
        <ecNumber evidence="1">4.1.99.22</ecNumber>
    </recommendedName>
    <alternativeName>
        <fullName evidence="1">Molybdenum cofactor biosynthesis protein A</fullName>
    </alternativeName>
</protein>
<proteinExistence type="inferred from homology"/>
<evidence type="ECO:0000255" key="1">
    <source>
        <dbReference type="HAMAP-Rule" id="MF_01225"/>
    </source>
</evidence>
<evidence type="ECO:0000255" key="2">
    <source>
        <dbReference type="PROSITE-ProRule" id="PRU01266"/>
    </source>
</evidence>
<evidence type="ECO:0000305" key="3"/>
<feature type="chain" id="PRO_0000153012" description="GTP 3',8-cyclase">
    <location>
        <begin position="1"/>
        <end position="326"/>
    </location>
</feature>
<feature type="domain" description="Radical SAM core" evidence="2">
    <location>
        <begin position="7"/>
        <end position="240"/>
    </location>
</feature>
<feature type="binding site" evidence="1">
    <location>
        <position position="16"/>
    </location>
    <ligand>
        <name>GTP</name>
        <dbReference type="ChEBI" id="CHEBI:37565"/>
    </ligand>
</feature>
<feature type="binding site" evidence="1">
    <location>
        <position position="23"/>
    </location>
    <ligand>
        <name>[4Fe-4S] cluster</name>
        <dbReference type="ChEBI" id="CHEBI:49883"/>
        <label>1</label>
        <note>4Fe-4S-S-AdoMet</note>
    </ligand>
</feature>
<feature type="binding site" evidence="1">
    <location>
        <position position="27"/>
    </location>
    <ligand>
        <name>[4Fe-4S] cluster</name>
        <dbReference type="ChEBI" id="CHEBI:49883"/>
        <label>1</label>
        <note>4Fe-4S-S-AdoMet</note>
    </ligand>
</feature>
<feature type="binding site" evidence="1">
    <location>
        <position position="29"/>
    </location>
    <ligand>
        <name>S-adenosyl-L-methionine</name>
        <dbReference type="ChEBI" id="CHEBI:59789"/>
    </ligand>
</feature>
<feature type="binding site" evidence="1">
    <location>
        <position position="30"/>
    </location>
    <ligand>
        <name>[4Fe-4S] cluster</name>
        <dbReference type="ChEBI" id="CHEBI:49883"/>
        <label>1</label>
        <note>4Fe-4S-S-AdoMet</note>
    </ligand>
</feature>
<feature type="binding site" evidence="1">
    <location>
        <position position="65"/>
    </location>
    <ligand>
        <name>GTP</name>
        <dbReference type="ChEBI" id="CHEBI:37565"/>
    </ligand>
</feature>
<feature type="binding site" evidence="1">
    <location>
        <position position="69"/>
    </location>
    <ligand>
        <name>S-adenosyl-L-methionine</name>
        <dbReference type="ChEBI" id="CHEBI:59789"/>
    </ligand>
</feature>
<feature type="binding site" evidence="1">
    <location>
        <position position="96"/>
    </location>
    <ligand>
        <name>GTP</name>
        <dbReference type="ChEBI" id="CHEBI:37565"/>
    </ligand>
</feature>
<feature type="binding site" evidence="1">
    <location>
        <position position="120"/>
    </location>
    <ligand>
        <name>S-adenosyl-L-methionine</name>
        <dbReference type="ChEBI" id="CHEBI:59789"/>
    </ligand>
</feature>
<feature type="binding site" evidence="1">
    <location>
        <position position="157"/>
    </location>
    <ligand>
        <name>GTP</name>
        <dbReference type="ChEBI" id="CHEBI:37565"/>
    </ligand>
</feature>
<feature type="binding site" evidence="1">
    <location>
        <position position="191"/>
    </location>
    <ligand>
        <name>S-adenosyl-L-methionine</name>
        <dbReference type="ChEBI" id="CHEBI:59789"/>
    </ligand>
</feature>
<feature type="binding site" evidence="1">
    <location>
        <position position="254"/>
    </location>
    <ligand>
        <name>[4Fe-4S] cluster</name>
        <dbReference type="ChEBI" id="CHEBI:49883"/>
        <label>2</label>
        <note>4Fe-4S-substrate</note>
    </ligand>
</feature>
<feature type="binding site" evidence="1">
    <location>
        <position position="257"/>
    </location>
    <ligand>
        <name>[4Fe-4S] cluster</name>
        <dbReference type="ChEBI" id="CHEBI:49883"/>
        <label>2</label>
        <note>4Fe-4S-substrate</note>
    </ligand>
</feature>
<feature type="binding site" evidence="1">
    <location>
        <begin position="259"/>
        <end position="261"/>
    </location>
    <ligand>
        <name>GTP</name>
        <dbReference type="ChEBI" id="CHEBI:37565"/>
    </ligand>
</feature>
<feature type="binding site" evidence="1">
    <location>
        <position position="271"/>
    </location>
    <ligand>
        <name>[4Fe-4S] cluster</name>
        <dbReference type="ChEBI" id="CHEBI:49883"/>
        <label>2</label>
        <note>4Fe-4S-substrate</note>
    </ligand>
</feature>
<dbReference type="EC" id="4.1.99.22" evidence="1"/>
<dbReference type="EMBL" id="AL590842">
    <property type="protein sequence ID" value="CAL19823.1"/>
    <property type="molecule type" value="Genomic_DNA"/>
</dbReference>
<dbReference type="EMBL" id="AE009952">
    <property type="protein sequence ID" value="AAM86573.1"/>
    <property type="status" value="ALT_INIT"/>
    <property type="molecule type" value="Genomic_DNA"/>
</dbReference>
<dbReference type="EMBL" id="AE017042">
    <property type="protein sequence ID" value="AAS61251.1"/>
    <property type="status" value="ALT_INIT"/>
    <property type="molecule type" value="Genomic_DNA"/>
</dbReference>
<dbReference type="PIR" id="AE0142">
    <property type="entry name" value="AE0142"/>
</dbReference>
<dbReference type="RefSeq" id="WP_002210771.1">
    <property type="nucleotide sequence ID" value="NZ_WUCM01000016.1"/>
</dbReference>
<dbReference type="RefSeq" id="YP_002346198.1">
    <property type="nucleotide sequence ID" value="NC_003143.1"/>
</dbReference>
<dbReference type="SMR" id="Q8ZGW5"/>
<dbReference type="STRING" id="214092.YPO1159"/>
<dbReference type="PaxDb" id="214092-YPO1159"/>
<dbReference type="DNASU" id="1147969"/>
<dbReference type="EnsemblBacteria" id="AAS61251">
    <property type="protein sequence ID" value="AAS61251"/>
    <property type="gene ID" value="YP_1000"/>
</dbReference>
<dbReference type="GeneID" id="57977298"/>
<dbReference type="KEGG" id="ype:YPO1159"/>
<dbReference type="KEGG" id="ypk:y3023"/>
<dbReference type="KEGG" id="ypl:CH46_3973"/>
<dbReference type="KEGG" id="ypm:YP_1000"/>
<dbReference type="KEGG" id="ypv:BZ15_2398"/>
<dbReference type="KEGG" id="ypw:CH59_686"/>
<dbReference type="PATRIC" id="fig|214092.21.peg.1456"/>
<dbReference type="eggNOG" id="COG2896">
    <property type="taxonomic scope" value="Bacteria"/>
</dbReference>
<dbReference type="HOGENOM" id="CLU_009273_0_1_6"/>
<dbReference type="OrthoDB" id="9763993at2"/>
<dbReference type="UniPathway" id="UPA00344"/>
<dbReference type="Proteomes" id="UP000000815">
    <property type="component" value="Chromosome"/>
</dbReference>
<dbReference type="Proteomes" id="UP000001019">
    <property type="component" value="Chromosome"/>
</dbReference>
<dbReference type="Proteomes" id="UP000002490">
    <property type="component" value="Chromosome"/>
</dbReference>
<dbReference type="GO" id="GO:0051539">
    <property type="term" value="F:4 iron, 4 sulfur cluster binding"/>
    <property type="evidence" value="ECO:0007669"/>
    <property type="project" value="UniProtKB-UniRule"/>
</dbReference>
<dbReference type="GO" id="GO:0061799">
    <property type="term" value="F:cyclic pyranopterin monophosphate synthase activity"/>
    <property type="evidence" value="ECO:0000318"/>
    <property type="project" value="GO_Central"/>
</dbReference>
<dbReference type="GO" id="GO:0061798">
    <property type="term" value="F:GTP 3',8'-cyclase activity"/>
    <property type="evidence" value="ECO:0000318"/>
    <property type="project" value="GO_Central"/>
</dbReference>
<dbReference type="GO" id="GO:0005525">
    <property type="term" value="F:GTP binding"/>
    <property type="evidence" value="ECO:0007669"/>
    <property type="project" value="UniProtKB-UniRule"/>
</dbReference>
<dbReference type="GO" id="GO:0046872">
    <property type="term" value="F:metal ion binding"/>
    <property type="evidence" value="ECO:0007669"/>
    <property type="project" value="UniProtKB-KW"/>
</dbReference>
<dbReference type="GO" id="GO:1904047">
    <property type="term" value="F:S-adenosyl-L-methionine binding"/>
    <property type="evidence" value="ECO:0007669"/>
    <property type="project" value="UniProtKB-UniRule"/>
</dbReference>
<dbReference type="GO" id="GO:0006777">
    <property type="term" value="P:Mo-molybdopterin cofactor biosynthetic process"/>
    <property type="evidence" value="ECO:0000318"/>
    <property type="project" value="GO_Central"/>
</dbReference>
<dbReference type="CDD" id="cd01335">
    <property type="entry name" value="Radical_SAM"/>
    <property type="match status" value="1"/>
</dbReference>
<dbReference type="CDD" id="cd21117">
    <property type="entry name" value="Twitch_MoaA"/>
    <property type="match status" value="1"/>
</dbReference>
<dbReference type="FunFam" id="3.20.20.70:FF:000057">
    <property type="entry name" value="GTP 3',8-cyclase"/>
    <property type="match status" value="1"/>
</dbReference>
<dbReference type="Gene3D" id="3.20.20.70">
    <property type="entry name" value="Aldolase class I"/>
    <property type="match status" value="1"/>
</dbReference>
<dbReference type="HAMAP" id="MF_01225_B">
    <property type="entry name" value="MoaA_B"/>
    <property type="match status" value="1"/>
</dbReference>
<dbReference type="InterPro" id="IPR013785">
    <property type="entry name" value="Aldolase_TIM"/>
</dbReference>
<dbReference type="InterPro" id="IPR006638">
    <property type="entry name" value="Elp3/MiaA/NifB-like_rSAM"/>
</dbReference>
<dbReference type="InterPro" id="IPR013483">
    <property type="entry name" value="MoaA"/>
</dbReference>
<dbReference type="InterPro" id="IPR000385">
    <property type="entry name" value="MoaA_NifB_PqqE_Fe-S-bd_CS"/>
</dbReference>
<dbReference type="InterPro" id="IPR010505">
    <property type="entry name" value="MoaA_twitch"/>
</dbReference>
<dbReference type="InterPro" id="IPR050105">
    <property type="entry name" value="MoCo_biosynth_MoaA/MoaC"/>
</dbReference>
<dbReference type="InterPro" id="IPR007197">
    <property type="entry name" value="rSAM"/>
</dbReference>
<dbReference type="NCBIfam" id="TIGR02666">
    <property type="entry name" value="moaA"/>
    <property type="match status" value="1"/>
</dbReference>
<dbReference type="PANTHER" id="PTHR22960:SF28">
    <property type="entry name" value="GTP 3',8-CYCLASE"/>
    <property type="match status" value="1"/>
</dbReference>
<dbReference type="PANTHER" id="PTHR22960">
    <property type="entry name" value="MOLYBDOPTERIN COFACTOR SYNTHESIS PROTEIN A"/>
    <property type="match status" value="1"/>
</dbReference>
<dbReference type="Pfam" id="PF13353">
    <property type="entry name" value="Fer4_12"/>
    <property type="match status" value="1"/>
</dbReference>
<dbReference type="Pfam" id="PF06463">
    <property type="entry name" value="Mob_synth_C"/>
    <property type="match status" value="1"/>
</dbReference>
<dbReference type="Pfam" id="PF04055">
    <property type="entry name" value="Radical_SAM"/>
    <property type="match status" value="1"/>
</dbReference>
<dbReference type="SFLD" id="SFLDG01383">
    <property type="entry name" value="cyclic_pyranopterin_phosphate"/>
    <property type="match status" value="1"/>
</dbReference>
<dbReference type="SFLD" id="SFLDG01386">
    <property type="entry name" value="main_SPASM_domain-containing"/>
    <property type="match status" value="1"/>
</dbReference>
<dbReference type="SMART" id="SM00729">
    <property type="entry name" value="Elp3"/>
    <property type="match status" value="1"/>
</dbReference>
<dbReference type="SUPFAM" id="SSF102114">
    <property type="entry name" value="Radical SAM enzymes"/>
    <property type="match status" value="1"/>
</dbReference>
<dbReference type="PROSITE" id="PS01305">
    <property type="entry name" value="MOAA_NIFB_PQQE"/>
    <property type="match status" value="1"/>
</dbReference>
<dbReference type="PROSITE" id="PS51918">
    <property type="entry name" value="RADICAL_SAM"/>
    <property type="match status" value="1"/>
</dbReference>
<reference key="1">
    <citation type="journal article" date="2001" name="Nature">
        <title>Genome sequence of Yersinia pestis, the causative agent of plague.</title>
        <authorList>
            <person name="Parkhill J."/>
            <person name="Wren B.W."/>
            <person name="Thomson N.R."/>
            <person name="Titball R.W."/>
            <person name="Holden M.T.G."/>
            <person name="Prentice M.B."/>
            <person name="Sebaihia M."/>
            <person name="James K.D."/>
            <person name="Churcher C.M."/>
            <person name="Mungall K.L."/>
            <person name="Baker S."/>
            <person name="Basham D."/>
            <person name="Bentley S.D."/>
            <person name="Brooks K."/>
            <person name="Cerdeno-Tarraga A.-M."/>
            <person name="Chillingworth T."/>
            <person name="Cronin A."/>
            <person name="Davies R.M."/>
            <person name="Davis P."/>
            <person name="Dougan G."/>
            <person name="Feltwell T."/>
            <person name="Hamlin N."/>
            <person name="Holroyd S."/>
            <person name="Jagels K."/>
            <person name="Karlyshev A.V."/>
            <person name="Leather S."/>
            <person name="Moule S."/>
            <person name="Oyston P.C.F."/>
            <person name="Quail M.A."/>
            <person name="Rutherford K.M."/>
            <person name="Simmonds M."/>
            <person name="Skelton J."/>
            <person name="Stevens K."/>
            <person name="Whitehead S."/>
            <person name="Barrell B.G."/>
        </authorList>
    </citation>
    <scope>NUCLEOTIDE SEQUENCE [LARGE SCALE GENOMIC DNA]</scope>
    <source>
        <strain>CO-92 / Biovar Orientalis</strain>
    </source>
</reference>
<reference key="2">
    <citation type="journal article" date="2002" name="J. Bacteriol.">
        <title>Genome sequence of Yersinia pestis KIM.</title>
        <authorList>
            <person name="Deng W."/>
            <person name="Burland V."/>
            <person name="Plunkett G. III"/>
            <person name="Boutin A."/>
            <person name="Mayhew G.F."/>
            <person name="Liss P."/>
            <person name="Perna N.T."/>
            <person name="Rose D.J."/>
            <person name="Mau B."/>
            <person name="Zhou S."/>
            <person name="Schwartz D.C."/>
            <person name="Fetherston J.D."/>
            <person name="Lindler L.E."/>
            <person name="Brubaker R.R."/>
            <person name="Plano G.V."/>
            <person name="Straley S.C."/>
            <person name="McDonough K.A."/>
            <person name="Nilles M.L."/>
            <person name="Matson J.S."/>
            <person name="Blattner F.R."/>
            <person name="Perry R.D."/>
        </authorList>
    </citation>
    <scope>NUCLEOTIDE SEQUENCE [LARGE SCALE GENOMIC DNA]</scope>
    <source>
        <strain>KIM10+ / Biovar Mediaevalis</strain>
    </source>
</reference>
<reference key="3">
    <citation type="journal article" date="2004" name="DNA Res.">
        <title>Complete genome sequence of Yersinia pestis strain 91001, an isolate avirulent to humans.</title>
        <authorList>
            <person name="Song Y."/>
            <person name="Tong Z."/>
            <person name="Wang J."/>
            <person name="Wang L."/>
            <person name="Guo Z."/>
            <person name="Han Y."/>
            <person name="Zhang J."/>
            <person name="Pei D."/>
            <person name="Zhou D."/>
            <person name="Qin H."/>
            <person name="Pang X."/>
            <person name="Han Y."/>
            <person name="Zhai J."/>
            <person name="Li M."/>
            <person name="Cui B."/>
            <person name="Qi Z."/>
            <person name="Jin L."/>
            <person name="Dai R."/>
            <person name="Chen F."/>
            <person name="Li S."/>
            <person name="Ye C."/>
            <person name="Du Z."/>
            <person name="Lin W."/>
            <person name="Wang J."/>
            <person name="Yu J."/>
            <person name="Yang H."/>
            <person name="Wang J."/>
            <person name="Huang P."/>
            <person name="Yang R."/>
        </authorList>
    </citation>
    <scope>NUCLEOTIDE SEQUENCE [LARGE SCALE GENOMIC DNA]</scope>
    <source>
        <strain>91001 / Biovar Mediaevalis</strain>
    </source>
</reference>
<comment type="function">
    <text evidence="1">Catalyzes the cyclization of GTP to (8S)-3',8-cyclo-7,8-dihydroguanosine 5'-triphosphate.</text>
</comment>
<comment type="catalytic activity">
    <reaction evidence="1">
        <text>GTP + AH2 + S-adenosyl-L-methionine = (8S)-3',8-cyclo-7,8-dihydroguanosine 5'-triphosphate + 5'-deoxyadenosine + L-methionine + A + H(+)</text>
        <dbReference type="Rhea" id="RHEA:49576"/>
        <dbReference type="ChEBI" id="CHEBI:13193"/>
        <dbReference type="ChEBI" id="CHEBI:15378"/>
        <dbReference type="ChEBI" id="CHEBI:17319"/>
        <dbReference type="ChEBI" id="CHEBI:17499"/>
        <dbReference type="ChEBI" id="CHEBI:37565"/>
        <dbReference type="ChEBI" id="CHEBI:57844"/>
        <dbReference type="ChEBI" id="CHEBI:59789"/>
        <dbReference type="ChEBI" id="CHEBI:131766"/>
        <dbReference type="EC" id="4.1.99.22"/>
    </reaction>
</comment>
<comment type="cofactor">
    <cofactor evidence="1">
        <name>[4Fe-4S] cluster</name>
        <dbReference type="ChEBI" id="CHEBI:49883"/>
    </cofactor>
    <text evidence="1">Binds 2 [4Fe-4S] clusters. Binds 1 [4Fe-4S] cluster coordinated with 3 cysteines and an exchangeable S-adenosyl-L-methionine and 1 [4Fe-4S] cluster coordinated with 3 cysteines and the GTP-derived substrate.</text>
</comment>
<comment type="pathway">
    <text evidence="1">Cofactor biosynthesis; molybdopterin biosynthesis.</text>
</comment>
<comment type="subunit">
    <text evidence="1">Monomer and homodimer.</text>
</comment>
<comment type="similarity">
    <text evidence="1">Belongs to the radical SAM superfamily. MoaA family.</text>
</comment>
<comment type="sequence caution" evidence="3">
    <conflict type="erroneous initiation">
        <sequence resource="EMBL-CDS" id="AAM86573"/>
    </conflict>
</comment>
<comment type="sequence caution" evidence="3">
    <conflict type="erroneous initiation">
        <sequence resource="EMBL-CDS" id="AAS61251"/>
    </conflict>
</comment>
<sequence>MVQLTDAFARKFYYLRLSITDVCNFRCTYCLPEGYRPDGVKSFLSLDEINRVSRAFALLGTEKIRLTGGEPSMRRDFTDIIATIRQNPAIRTLAVTTNGYRLVRDVAQWRDAGLTAINVSVDSLDPRQFHAITGQDKFYQVMQGIDAAFDAGFDKVKVNAVLMRDVNDRQLSAFLDWIKPRPIQLRFIELMETGEGGNLFRKHHVSGGVIRQQLLEQGWQQQDRARSDGPAQVFHHSDYQGEIGLIMPYEKDFCASCNRLRVSALGNLHLCLFGEQGITLRDLLGSDDQQDELIARIQSALQTKKQTHFLHQGNSGITQNLSFIGG</sequence>
<accession>Q8ZGW5</accession>
<accession>Q0WHP0</accession>
<name>MOAA_YERPE</name>
<organism>
    <name type="scientific">Yersinia pestis</name>
    <dbReference type="NCBI Taxonomy" id="632"/>
    <lineage>
        <taxon>Bacteria</taxon>
        <taxon>Pseudomonadati</taxon>
        <taxon>Pseudomonadota</taxon>
        <taxon>Gammaproteobacteria</taxon>
        <taxon>Enterobacterales</taxon>
        <taxon>Yersiniaceae</taxon>
        <taxon>Yersinia</taxon>
    </lineage>
</organism>
<keyword id="KW-0004">4Fe-4S</keyword>
<keyword id="KW-0342">GTP-binding</keyword>
<keyword id="KW-0408">Iron</keyword>
<keyword id="KW-0411">Iron-sulfur</keyword>
<keyword id="KW-0456">Lyase</keyword>
<keyword id="KW-0479">Metal-binding</keyword>
<keyword id="KW-0501">Molybdenum cofactor biosynthesis</keyword>
<keyword id="KW-0547">Nucleotide-binding</keyword>
<keyword id="KW-1185">Reference proteome</keyword>
<keyword id="KW-0949">S-adenosyl-L-methionine</keyword>
<gene>
    <name evidence="1" type="primary">moaA</name>
    <name type="ordered locus">YPO1159</name>
    <name type="ordered locus">y3023</name>
    <name type="ordered locus">YP_1000</name>
</gene>